<comment type="function">
    <text evidence="2">Plays an essential role in viral RNA transcription and replication by forming the heterotrimeric polymerase complex together with PB1 and PB2 subunits. The complex transcribes viral mRNAs by using a unique mechanism called cap-snatching. It consists in the hijacking and cleavage of host capped pre-mRNAs. These short capped RNAs are then used as primers for viral mRNAs. The PB2 subunit is responsible for the binding of the 5' cap of cellular pre-mRNAs which are subsequently cleaved after 10-13 nucleotides by the PA subunit that carries the endonuclease activity.</text>
</comment>
<comment type="cofactor">
    <cofactor evidence="2">
        <name>Mn(2+)</name>
        <dbReference type="ChEBI" id="CHEBI:29035"/>
    </cofactor>
    <text evidence="2">Binds 2 manganese ions per subunit.</text>
</comment>
<comment type="subunit">
    <text evidence="1 2">Influenza RNA polymerase is composed of three subunits: PB1, PB2 and PA. Interacts (via C-terminus) with PB1 (via N-terminus).</text>
</comment>
<comment type="subcellular location">
    <subcellularLocation>
        <location evidence="2">Host cytoplasm</location>
    </subcellularLocation>
    <subcellularLocation>
        <location evidence="2">Host nucleus</location>
    </subcellularLocation>
    <text evidence="1 2">PB1 and PA are transported in the host nucleus as a complex.</text>
</comment>
<comment type="alternative products">
    <event type="ribosomal frameshifting"/>
    <isoform>
        <id>P13176-1</id>
        <name>PA</name>
        <sequence type="displayed"/>
    </isoform>
    <isoform>
        <id>P0DJU6-1</id>
        <name>PA-X</name>
        <sequence type="external"/>
    </isoform>
</comment>
<comment type="PTM">
    <text evidence="1 2">Phosphorylated on serines and threonines by host kinases, including human casein kinase II.</text>
</comment>
<comment type="similarity">
    <text evidence="2">Belongs to the influenza viruses PA family.</text>
</comment>
<feature type="chain" id="PRO_0000078798" description="Polymerase acidic protein">
    <location>
        <begin position="1"/>
        <end position="716"/>
    </location>
</feature>
<feature type="short sequence motif" description="Nuclear localization signal 1 (NLS1)" evidence="1 2">
    <location>
        <begin position="124"/>
        <end position="139"/>
    </location>
</feature>
<feature type="short sequence motif" description="Nuclear localization signal 2 (NLS2)" evidence="1 2">
    <location>
        <begin position="184"/>
        <end position="247"/>
    </location>
</feature>
<feature type="binding site" evidence="2">
    <location>
        <position position="41"/>
    </location>
    <ligand>
        <name>Mn(2+)</name>
        <dbReference type="ChEBI" id="CHEBI:29035"/>
        <label>1</label>
    </ligand>
</feature>
<feature type="binding site" evidence="2">
    <location>
        <position position="80"/>
    </location>
    <ligand>
        <name>Mn(2+)</name>
        <dbReference type="ChEBI" id="CHEBI:29035"/>
        <label>2</label>
    </ligand>
</feature>
<feature type="binding site" evidence="2">
    <location>
        <position position="108"/>
    </location>
    <ligand>
        <name>Mn(2+)</name>
        <dbReference type="ChEBI" id="CHEBI:29035"/>
        <label>1</label>
    </ligand>
</feature>
<feature type="binding site" evidence="2">
    <location>
        <position position="108"/>
    </location>
    <ligand>
        <name>Mn(2+)</name>
        <dbReference type="ChEBI" id="CHEBI:29035"/>
        <label>2</label>
    </ligand>
</feature>
<feature type="binding site" evidence="2">
    <location>
        <position position="119"/>
    </location>
    <ligand>
        <name>Mn(2+)</name>
        <dbReference type="ChEBI" id="CHEBI:29035"/>
        <label>1</label>
    </ligand>
</feature>
<feature type="binding site" evidence="2">
    <location>
        <position position="120"/>
    </location>
    <ligand>
        <name>Mn(2+)</name>
        <dbReference type="ChEBI" id="CHEBI:29035"/>
        <label>1</label>
    </ligand>
</feature>
<feature type="sequence conflict" description="In Ref. 2; AAO46307." ref="2">
    <original>N</original>
    <variation>D</variation>
    <location>
        <position position="386"/>
    </location>
</feature>
<feature type="sequence conflict" description="In Ref. 2; AAO46307." ref="2">
    <original>P</original>
    <variation>R</variation>
    <location>
        <position position="583"/>
    </location>
</feature>
<proteinExistence type="inferred from homology"/>
<name>PA_I57A5</name>
<gene>
    <name evidence="2" type="primary">PA</name>
</gene>
<organism>
    <name type="scientific">Influenza A virus (strain A/Singapore/1/1957 H2N2)</name>
    <dbReference type="NCBI Taxonomy" id="382781"/>
    <lineage>
        <taxon>Viruses</taxon>
        <taxon>Riboviria</taxon>
        <taxon>Orthornavirae</taxon>
        <taxon>Negarnaviricota</taxon>
        <taxon>Polyploviricotina</taxon>
        <taxon>Insthoviricetes</taxon>
        <taxon>Articulavirales</taxon>
        <taxon>Orthomyxoviridae</taxon>
        <taxon>Alphainfluenzavirus</taxon>
        <taxon>Alphainfluenzavirus influenzae</taxon>
        <taxon>Influenza A virus</taxon>
    </lineage>
</organism>
<sequence>MEDFVRQCFNPMIVELAERAMKEYGEDLKIETNKFAAICTHLEVCFMYSDFHFINEQGESIIVELDDPNALLKHRFEIIEGRDRTMAWTVVNSICNTTGAEKPKFLPDLYDYKENRFIEIGVTRREVHIYYLEKANKIKSEKTHIHIFSFTGEEMATKADYTLDEESRARIKTRLFTIRQEMASRGLWDSFRQSERGEETIEERFEITGTMRRLADQSLPPNFSCLENFRAYVDGFEPNGYIEGKLSQMSKEVNAKIEPFLKTTPRPIRLPDGPPCSQRSKFLLMDALKLSIEDPSHEGEGIPLYDAIKCMRTFFGWKEPYVVKPHEKGINPNYLLSWKQVLAELQDIENEEKIPRTKNMKKTSQLKWALGENMAPEKVDFDDCRNISDLKQYDSDEPELRSLSSWIQNEFNKACELTNSIWIELDEIGEDVAPIEHIASMRRNYFTAEVSHCRATEYIMKGVYINTALLNASCAAMDDFQLIPMISKCRTKEGRRKTNLYGFIIKGRSHLRNDTDVVNFVSMEFSLTDPRLEPHKWEKYCVLEIGDMLLRSAIGQVSRPMFLYVRTNGTSKIKMKWGMEMRPCLLQSLQQIESMIEAESSVKEKDMTKEFFENKSETWPIGESPKGVEEGSIGKVCRTLLAKSVFNSLYASPQLEGFSAESRKLLLVVQALRDNLEPGTFDLGGLYEAIEECLINDPWVLLNASWFNSFLTHALR</sequence>
<protein>
    <recommendedName>
        <fullName evidence="2">Polymerase acidic protein</fullName>
        <ecNumber evidence="2">3.1.-.-</ecNumber>
    </recommendedName>
    <alternativeName>
        <fullName evidence="2">RNA-directed RNA polymerase subunit P2</fullName>
    </alternativeName>
</protein>
<accession>P13176</accession>
<accession>Q6XU49</accession>
<reference key="1">
    <citation type="journal article" date="1989" name="Virology">
        <title>Evolutionary pathways of the PA genes of influenza A viruses.</title>
        <authorList>
            <person name="Okazaki K."/>
            <person name="Kawaoka Y."/>
            <person name="Webster R.G."/>
        </authorList>
    </citation>
    <scope>NUCLEOTIDE SEQUENCE [GENOMIC RNA]</scope>
</reference>
<reference key="2">
    <citation type="journal article" date="2004" name="Virology">
        <title>Genetic analysis of human H2N2 and early H3N2 influenza viruses, 1957-1972: evidence for genetic divergence and multiple reassortment events.</title>
        <authorList>
            <person name="Lindstrom S.E."/>
            <person name="Cox N.J."/>
            <person name="Klimov A."/>
        </authorList>
    </citation>
    <scope>NUCLEOTIDE SEQUENCE [GENOMIC RNA]</scope>
</reference>
<evidence type="ECO:0000250" key="1">
    <source>
        <dbReference type="UniProtKB" id="P03433"/>
    </source>
</evidence>
<evidence type="ECO:0000255" key="2">
    <source>
        <dbReference type="HAMAP-Rule" id="MF_04063"/>
    </source>
</evidence>
<dbReference type="EC" id="3.1.-.-" evidence="2"/>
<dbReference type="EMBL" id="M26078">
    <property type="protein sequence ID" value="AAA43677.1"/>
    <property type="molecule type" value="Genomic_RNA"/>
</dbReference>
<dbReference type="EMBL" id="AY209991">
    <property type="protein sequence ID" value="AAO46307.1"/>
    <property type="molecule type" value="Genomic_RNA"/>
</dbReference>
<dbReference type="SMR" id="P13176"/>
<dbReference type="MEROPS" id="S62.001"/>
<dbReference type="GO" id="GO:0030430">
    <property type="term" value="C:host cell cytoplasm"/>
    <property type="evidence" value="ECO:0007669"/>
    <property type="project" value="UniProtKB-SubCell"/>
</dbReference>
<dbReference type="GO" id="GO:0042025">
    <property type="term" value="C:host cell nucleus"/>
    <property type="evidence" value="ECO:0007669"/>
    <property type="project" value="UniProtKB-SubCell"/>
</dbReference>
<dbReference type="GO" id="GO:0004519">
    <property type="term" value="F:endonuclease activity"/>
    <property type="evidence" value="ECO:0007669"/>
    <property type="project" value="UniProtKB-KW"/>
</dbReference>
<dbReference type="GO" id="GO:0046872">
    <property type="term" value="F:metal ion binding"/>
    <property type="evidence" value="ECO:0007669"/>
    <property type="project" value="UniProtKB-KW"/>
</dbReference>
<dbReference type="GO" id="GO:0003723">
    <property type="term" value="F:RNA binding"/>
    <property type="evidence" value="ECO:0007669"/>
    <property type="project" value="UniProtKB-UniRule"/>
</dbReference>
<dbReference type="GO" id="GO:0075526">
    <property type="term" value="P:cap snatching"/>
    <property type="evidence" value="ECO:0007669"/>
    <property type="project" value="UniProtKB-UniRule"/>
</dbReference>
<dbReference type="GO" id="GO:0006351">
    <property type="term" value="P:DNA-templated transcription"/>
    <property type="evidence" value="ECO:0007669"/>
    <property type="project" value="UniProtKB-UniRule"/>
</dbReference>
<dbReference type="GO" id="GO:0039657">
    <property type="term" value="P:symbiont-mediated suppression of host gene expression"/>
    <property type="evidence" value="ECO:0007669"/>
    <property type="project" value="UniProtKB-KW"/>
</dbReference>
<dbReference type="GO" id="GO:0039523">
    <property type="term" value="P:symbiont-mediated suppression of host mRNA transcription via inhibition of RNA polymerase II activity"/>
    <property type="evidence" value="ECO:0007669"/>
    <property type="project" value="UniProtKB-UniRule"/>
</dbReference>
<dbReference type="GO" id="GO:0039694">
    <property type="term" value="P:viral RNA genome replication"/>
    <property type="evidence" value="ECO:0007669"/>
    <property type="project" value="InterPro"/>
</dbReference>
<dbReference type="GO" id="GO:0075523">
    <property type="term" value="P:viral translational frameshifting"/>
    <property type="evidence" value="ECO:0007669"/>
    <property type="project" value="UniProtKB-KW"/>
</dbReference>
<dbReference type="FunFam" id="3.40.91.90:FF:000001">
    <property type="entry name" value="Polymerase acidic protein"/>
    <property type="match status" value="1"/>
</dbReference>
<dbReference type="Gene3D" id="3.40.91.90">
    <property type="entry name" value="Influenza RNA-dependent RNA polymerase subunit PA, endonuclease domain"/>
    <property type="match status" value="1"/>
</dbReference>
<dbReference type="HAMAP" id="MF_04063">
    <property type="entry name" value="INFV_PA"/>
    <property type="match status" value="1"/>
</dbReference>
<dbReference type="InterPro" id="IPR037534">
    <property type="entry name" value="INFV_PA"/>
</dbReference>
<dbReference type="InterPro" id="IPR001009">
    <property type="entry name" value="PA/PA-X"/>
</dbReference>
<dbReference type="InterPro" id="IPR038372">
    <property type="entry name" value="PA/PA-X_sf"/>
</dbReference>
<dbReference type="Pfam" id="PF00603">
    <property type="entry name" value="Flu_PA"/>
    <property type="match status" value="1"/>
</dbReference>
<organismHost>
    <name type="scientific">Aves</name>
    <dbReference type="NCBI Taxonomy" id="8782"/>
</organismHost>
<organismHost>
    <name type="scientific">Homo sapiens</name>
    <name type="common">Human</name>
    <dbReference type="NCBI Taxonomy" id="9606"/>
</organismHost>
<keyword id="KW-1157">Cap snatching</keyword>
<keyword id="KW-0255">Endonuclease</keyword>
<keyword id="KW-1262">Eukaryotic host gene expression shutoff by virus</keyword>
<keyword id="KW-1191">Eukaryotic host transcription shutoff by virus</keyword>
<keyword id="KW-1035">Host cytoplasm</keyword>
<keyword id="KW-1190">Host gene expression shutoff by virus</keyword>
<keyword id="KW-1048">Host nucleus</keyword>
<keyword id="KW-0945">Host-virus interaction</keyword>
<keyword id="KW-0378">Hydrolase</keyword>
<keyword id="KW-1104">Inhibition of host RNA polymerase II by virus</keyword>
<keyword id="KW-0464">Manganese</keyword>
<keyword id="KW-0479">Metal-binding</keyword>
<keyword id="KW-0540">Nuclease</keyword>
<keyword id="KW-0597">Phosphoprotein</keyword>
<keyword id="KW-0688">Ribosomal frameshifting</keyword>